<name>GMHA_SHEDO</name>
<feature type="chain" id="PRO_1000197017" description="Phosphoheptose isomerase">
    <location>
        <begin position="1"/>
        <end position="196"/>
    </location>
</feature>
<feature type="domain" description="SIS" evidence="1">
    <location>
        <begin position="34"/>
        <end position="196"/>
    </location>
</feature>
<feature type="binding site" evidence="1">
    <location>
        <begin position="49"/>
        <end position="51"/>
    </location>
    <ligand>
        <name>substrate</name>
    </ligand>
</feature>
<feature type="binding site" evidence="1">
    <location>
        <position position="58"/>
    </location>
    <ligand>
        <name>Zn(2+)</name>
        <dbReference type="ChEBI" id="CHEBI:29105"/>
    </ligand>
</feature>
<feature type="binding site" evidence="1">
    <location>
        <position position="62"/>
    </location>
    <ligand>
        <name>substrate</name>
    </ligand>
</feature>
<feature type="binding site" evidence="1">
    <location>
        <position position="62"/>
    </location>
    <ligand>
        <name>Zn(2+)</name>
        <dbReference type="ChEBI" id="CHEBI:29105"/>
    </ligand>
</feature>
<feature type="binding site" evidence="1">
    <location>
        <begin position="91"/>
        <end position="92"/>
    </location>
    <ligand>
        <name>substrate</name>
    </ligand>
</feature>
<feature type="binding site" evidence="1">
    <location>
        <begin position="117"/>
        <end position="119"/>
    </location>
    <ligand>
        <name>substrate</name>
    </ligand>
</feature>
<feature type="binding site" evidence="1">
    <location>
        <position position="122"/>
    </location>
    <ligand>
        <name>substrate</name>
    </ligand>
</feature>
<feature type="binding site" evidence="1">
    <location>
        <position position="172"/>
    </location>
    <ligand>
        <name>substrate</name>
    </ligand>
</feature>
<feature type="binding site" evidence="1">
    <location>
        <position position="172"/>
    </location>
    <ligand>
        <name>Zn(2+)</name>
        <dbReference type="ChEBI" id="CHEBI:29105"/>
    </ligand>
</feature>
<feature type="binding site" evidence="1">
    <location>
        <position position="180"/>
    </location>
    <ligand>
        <name>Zn(2+)</name>
        <dbReference type="ChEBI" id="CHEBI:29105"/>
    </ligand>
</feature>
<protein>
    <recommendedName>
        <fullName evidence="1">Phosphoheptose isomerase</fullName>
        <ecNumber evidence="1">5.3.1.28</ecNumber>
    </recommendedName>
    <alternativeName>
        <fullName evidence="1">Sedoheptulose 7-phosphate isomerase</fullName>
    </alternativeName>
</protein>
<proteinExistence type="inferred from homology"/>
<comment type="function">
    <text evidence="1">Catalyzes the isomerization of sedoheptulose 7-phosphate in D-glycero-D-manno-heptose 7-phosphate.</text>
</comment>
<comment type="catalytic activity">
    <reaction evidence="1">
        <text>2 D-sedoheptulose 7-phosphate = D-glycero-alpha-D-manno-heptose 7-phosphate + D-glycero-beta-D-manno-heptose 7-phosphate</text>
        <dbReference type="Rhea" id="RHEA:27489"/>
        <dbReference type="ChEBI" id="CHEBI:57483"/>
        <dbReference type="ChEBI" id="CHEBI:60203"/>
        <dbReference type="ChEBI" id="CHEBI:60204"/>
        <dbReference type="EC" id="5.3.1.28"/>
    </reaction>
</comment>
<comment type="cofactor">
    <cofactor evidence="1">
        <name>Zn(2+)</name>
        <dbReference type="ChEBI" id="CHEBI:29105"/>
    </cofactor>
    <text evidence="1">Binds 1 zinc ion per subunit.</text>
</comment>
<comment type="pathway">
    <text evidence="1">Carbohydrate biosynthesis; D-glycero-D-manno-heptose 7-phosphate biosynthesis; D-glycero-alpha-D-manno-heptose 7-phosphate and D-glycero-beta-D-manno-heptose 7-phosphate from sedoheptulose 7-phosphate: step 1/1.</text>
</comment>
<comment type="subunit">
    <text evidence="1">Homotetramer.</text>
</comment>
<comment type="subcellular location">
    <subcellularLocation>
        <location evidence="1">Cytoplasm</location>
    </subcellularLocation>
</comment>
<comment type="miscellaneous">
    <text evidence="1">The reaction produces a racemic mixture of D-glycero-alpha-D-manno-heptose 7-phosphate and D-glycero-beta-D-manno-heptose 7-phosphate.</text>
</comment>
<comment type="similarity">
    <text evidence="1">Belongs to the SIS family. GmhA subfamily.</text>
</comment>
<sequence>MLERIKDSFTESIQTKIDAAEALPESIEKAAEMMVQCLLGGKKILACGNGGSAGDAQHFSAELLNRYEIERPPLPAIALSTDTSTITAIANDYSYDEIFSKQIFALGQPGDILLAISTSGNSGNIIKAMEAALSRDMTIVALTGKDGGAMAGLMSAGDVEIRVPSNVTARIQEVHLLVIHCLCDNIDRTLFPQDEA</sequence>
<accession>Q12SK9</accession>
<evidence type="ECO:0000255" key="1">
    <source>
        <dbReference type="HAMAP-Rule" id="MF_00067"/>
    </source>
</evidence>
<organism>
    <name type="scientific">Shewanella denitrificans (strain OS217 / ATCC BAA-1090 / DSM 15013)</name>
    <dbReference type="NCBI Taxonomy" id="318161"/>
    <lineage>
        <taxon>Bacteria</taxon>
        <taxon>Pseudomonadati</taxon>
        <taxon>Pseudomonadota</taxon>
        <taxon>Gammaproteobacteria</taxon>
        <taxon>Alteromonadales</taxon>
        <taxon>Shewanellaceae</taxon>
        <taxon>Shewanella</taxon>
    </lineage>
</organism>
<gene>
    <name evidence="1" type="primary">gmhA</name>
    <name type="ordered locus">Sden_0271</name>
</gene>
<reference key="1">
    <citation type="submission" date="2006-03" db="EMBL/GenBank/DDBJ databases">
        <title>Complete sequence of Shewanella denitrificans OS217.</title>
        <authorList>
            <consortium name="US DOE Joint Genome Institute"/>
            <person name="Copeland A."/>
            <person name="Lucas S."/>
            <person name="Lapidus A."/>
            <person name="Barry K."/>
            <person name="Detter J.C."/>
            <person name="Glavina del Rio T."/>
            <person name="Hammon N."/>
            <person name="Israni S."/>
            <person name="Dalin E."/>
            <person name="Tice H."/>
            <person name="Pitluck S."/>
            <person name="Brettin T."/>
            <person name="Bruce D."/>
            <person name="Han C."/>
            <person name="Tapia R."/>
            <person name="Gilna P."/>
            <person name="Kiss H."/>
            <person name="Schmutz J."/>
            <person name="Larimer F."/>
            <person name="Land M."/>
            <person name="Hauser L."/>
            <person name="Kyrpides N."/>
            <person name="Lykidis A."/>
            <person name="Richardson P."/>
        </authorList>
    </citation>
    <scope>NUCLEOTIDE SEQUENCE [LARGE SCALE GENOMIC DNA]</scope>
    <source>
        <strain>OS217 / ATCC BAA-1090 / DSM 15013</strain>
    </source>
</reference>
<dbReference type="EC" id="5.3.1.28" evidence="1"/>
<dbReference type="EMBL" id="CP000302">
    <property type="protein sequence ID" value="ABE53567.1"/>
    <property type="molecule type" value="Genomic_DNA"/>
</dbReference>
<dbReference type="RefSeq" id="WP_011494734.1">
    <property type="nucleotide sequence ID" value="NC_007954.1"/>
</dbReference>
<dbReference type="SMR" id="Q12SK9"/>
<dbReference type="STRING" id="318161.Sden_0271"/>
<dbReference type="KEGG" id="sdn:Sden_0271"/>
<dbReference type="eggNOG" id="COG0279">
    <property type="taxonomic scope" value="Bacteria"/>
</dbReference>
<dbReference type="HOGENOM" id="CLU_080999_3_1_6"/>
<dbReference type="OrthoDB" id="9810929at2"/>
<dbReference type="UniPathway" id="UPA00041">
    <property type="reaction ID" value="UER00436"/>
</dbReference>
<dbReference type="Proteomes" id="UP000001982">
    <property type="component" value="Chromosome"/>
</dbReference>
<dbReference type="GO" id="GO:0005737">
    <property type="term" value="C:cytoplasm"/>
    <property type="evidence" value="ECO:0007669"/>
    <property type="project" value="UniProtKB-SubCell"/>
</dbReference>
<dbReference type="GO" id="GO:0097367">
    <property type="term" value="F:carbohydrate derivative binding"/>
    <property type="evidence" value="ECO:0007669"/>
    <property type="project" value="InterPro"/>
</dbReference>
<dbReference type="GO" id="GO:0008968">
    <property type="term" value="F:D-sedoheptulose 7-phosphate isomerase activity"/>
    <property type="evidence" value="ECO:0007669"/>
    <property type="project" value="UniProtKB-UniRule"/>
</dbReference>
<dbReference type="GO" id="GO:0008270">
    <property type="term" value="F:zinc ion binding"/>
    <property type="evidence" value="ECO:0007669"/>
    <property type="project" value="UniProtKB-UniRule"/>
</dbReference>
<dbReference type="GO" id="GO:0005975">
    <property type="term" value="P:carbohydrate metabolic process"/>
    <property type="evidence" value="ECO:0007669"/>
    <property type="project" value="UniProtKB-UniRule"/>
</dbReference>
<dbReference type="GO" id="GO:2001061">
    <property type="term" value="P:D-glycero-D-manno-heptose 7-phosphate biosynthetic process"/>
    <property type="evidence" value="ECO:0007669"/>
    <property type="project" value="UniProtKB-UniPathway"/>
</dbReference>
<dbReference type="CDD" id="cd05006">
    <property type="entry name" value="SIS_GmhA"/>
    <property type="match status" value="1"/>
</dbReference>
<dbReference type="Gene3D" id="3.40.50.10490">
    <property type="entry name" value="Glucose-6-phosphate isomerase like protein, domain 1"/>
    <property type="match status" value="1"/>
</dbReference>
<dbReference type="HAMAP" id="MF_00067">
    <property type="entry name" value="GmhA"/>
    <property type="match status" value="1"/>
</dbReference>
<dbReference type="InterPro" id="IPR035461">
    <property type="entry name" value="GmhA/DiaA"/>
</dbReference>
<dbReference type="InterPro" id="IPR004515">
    <property type="entry name" value="Phosphoheptose_Isoase"/>
</dbReference>
<dbReference type="InterPro" id="IPR001347">
    <property type="entry name" value="SIS_dom"/>
</dbReference>
<dbReference type="InterPro" id="IPR046348">
    <property type="entry name" value="SIS_dom_sf"/>
</dbReference>
<dbReference type="InterPro" id="IPR050099">
    <property type="entry name" value="SIS_GmhA/DiaA_subfam"/>
</dbReference>
<dbReference type="NCBIfam" id="NF010546">
    <property type="entry name" value="PRK13936.1"/>
    <property type="match status" value="1"/>
</dbReference>
<dbReference type="PANTHER" id="PTHR30390:SF6">
    <property type="entry name" value="DNAA INITIATOR-ASSOCIATING PROTEIN DIAA"/>
    <property type="match status" value="1"/>
</dbReference>
<dbReference type="PANTHER" id="PTHR30390">
    <property type="entry name" value="SEDOHEPTULOSE 7-PHOSPHATE ISOMERASE / DNAA INITIATOR-ASSOCIATING FACTOR FOR REPLICATION INITIATION"/>
    <property type="match status" value="1"/>
</dbReference>
<dbReference type="Pfam" id="PF13580">
    <property type="entry name" value="SIS_2"/>
    <property type="match status" value="1"/>
</dbReference>
<dbReference type="SUPFAM" id="SSF53697">
    <property type="entry name" value="SIS domain"/>
    <property type="match status" value="1"/>
</dbReference>
<dbReference type="PROSITE" id="PS51464">
    <property type="entry name" value="SIS"/>
    <property type="match status" value="1"/>
</dbReference>
<keyword id="KW-0119">Carbohydrate metabolism</keyword>
<keyword id="KW-0963">Cytoplasm</keyword>
<keyword id="KW-0413">Isomerase</keyword>
<keyword id="KW-0479">Metal-binding</keyword>
<keyword id="KW-1185">Reference proteome</keyword>
<keyword id="KW-0862">Zinc</keyword>